<organism>
    <name type="scientific">Clostridium botulinum (strain Eklund 17B / Type B)</name>
    <dbReference type="NCBI Taxonomy" id="935198"/>
    <lineage>
        <taxon>Bacteria</taxon>
        <taxon>Bacillati</taxon>
        <taxon>Bacillota</taxon>
        <taxon>Clostridia</taxon>
        <taxon>Eubacteriales</taxon>
        <taxon>Clostridiaceae</taxon>
        <taxon>Clostridium</taxon>
    </lineage>
</organism>
<gene>
    <name type="ordered locus">CLL_A3446</name>
</gene>
<accession>B2TR54</accession>
<dbReference type="EMBL" id="CP001056">
    <property type="protein sequence ID" value="ACD22094.1"/>
    <property type="molecule type" value="Genomic_DNA"/>
</dbReference>
<dbReference type="SMR" id="B2TR54"/>
<dbReference type="KEGG" id="cbk:CLL_A3446"/>
<dbReference type="PATRIC" id="fig|935198.13.peg.3403"/>
<dbReference type="HOGENOM" id="CLU_140930_1_0_9"/>
<dbReference type="Proteomes" id="UP000001195">
    <property type="component" value="Chromosome"/>
</dbReference>
<dbReference type="GO" id="GO:0043590">
    <property type="term" value="C:bacterial nucleoid"/>
    <property type="evidence" value="ECO:0007669"/>
    <property type="project" value="UniProtKB-UniRule"/>
</dbReference>
<dbReference type="GO" id="GO:0005829">
    <property type="term" value="C:cytosol"/>
    <property type="evidence" value="ECO:0007669"/>
    <property type="project" value="TreeGrafter"/>
</dbReference>
<dbReference type="GO" id="GO:0003677">
    <property type="term" value="F:DNA binding"/>
    <property type="evidence" value="ECO:0007669"/>
    <property type="project" value="UniProtKB-UniRule"/>
</dbReference>
<dbReference type="Gene3D" id="3.30.1310.10">
    <property type="entry name" value="Nucleoid-associated protein YbaB-like domain"/>
    <property type="match status" value="1"/>
</dbReference>
<dbReference type="HAMAP" id="MF_00274">
    <property type="entry name" value="DNA_YbaB_EbfC"/>
    <property type="match status" value="1"/>
</dbReference>
<dbReference type="InterPro" id="IPR036894">
    <property type="entry name" value="YbaB-like_sf"/>
</dbReference>
<dbReference type="InterPro" id="IPR004401">
    <property type="entry name" value="YbaB/EbfC"/>
</dbReference>
<dbReference type="NCBIfam" id="TIGR00103">
    <property type="entry name" value="DNA_YbaB_EbfC"/>
    <property type="match status" value="1"/>
</dbReference>
<dbReference type="PANTHER" id="PTHR33449">
    <property type="entry name" value="NUCLEOID-ASSOCIATED PROTEIN YBAB"/>
    <property type="match status" value="1"/>
</dbReference>
<dbReference type="PANTHER" id="PTHR33449:SF1">
    <property type="entry name" value="NUCLEOID-ASSOCIATED PROTEIN YBAB"/>
    <property type="match status" value="1"/>
</dbReference>
<dbReference type="Pfam" id="PF02575">
    <property type="entry name" value="YbaB_DNA_bd"/>
    <property type="match status" value="1"/>
</dbReference>
<dbReference type="PIRSF" id="PIRSF004555">
    <property type="entry name" value="UCP004555"/>
    <property type="match status" value="1"/>
</dbReference>
<dbReference type="SUPFAM" id="SSF82607">
    <property type="entry name" value="YbaB-like"/>
    <property type="match status" value="1"/>
</dbReference>
<comment type="function">
    <text evidence="1">Binds to DNA and alters its conformation. May be involved in regulation of gene expression, nucleoid organization and DNA protection.</text>
</comment>
<comment type="subunit">
    <text evidence="1">Homodimer.</text>
</comment>
<comment type="subcellular location">
    <subcellularLocation>
        <location evidence="1">Cytoplasm</location>
        <location evidence="1">Nucleoid</location>
    </subcellularLocation>
</comment>
<comment type="similarity">
    <text evidence="1">Belongs to the YbaB/EbfC family.</text>
</comment>
<evidence type="ECO:0000255" key="1">
    <source>
        <dbReference type="HAMAP-Rule" id="MF_00274"/>
    </source>
</evidence>
<evidence type="ECO:0000256" key="2">
    <source>
        <dbReference type="SAM" id="MobiDB-lite"/>
    </source>
</evidence>
<feature type="chain" id="PRO_1000114602" description="Nucleoid-associated protein CLL_A3446">
    <location>
        <begin position="1"/>
        <end position="113"/>
    </location>
</feature>
<feature type="region of interest" description="Disordered" evidence="2">
    <location>
        <begin position="1"/>
        <end position="31"/>
    </location>
</feature>
<feature type="compositionally biased region" description="Gly residues" evidence="2">
    <location>
        <begin position="1"/>
        <end position="14"/>
    </location>
</feature>
<proteinExistence type="inferred from homology"/>
<reference key="1">
    <citation type="submission" date="2008-04" db="EMBL/GenBank/DDBJ databases">
        <title>Complete sequence of Clostridium botulinum strain Eklund.</title>
        <authorList>
            <person name="Brinkac L.M."/>
            <person name="Brown J.L."/>
            <person name="Bruce D."/>
            <person name="Detter C."/>
            <person name="Munk C."/>
            <person name="Smith L.A."/>
            <person name="Smith T.J."/>
            <person name="Sutton G."/>
            <person name="Brettin T.S."/>
        </authorList>
    </citation>
    <scope>NUCLEOTIDE SEQUENCE [LARGE SCALE GENOMIC DNA]</scope>
    <source>
        <strain>Eklund 17B / Type B</strain>
    </source>
</reference>
<name>Y3446_CLOBB</name>
<protein>
    <recommendedName>
        <fullName evidence="1">Nucleoid-associated protein CLL_A3446</fullName>
    </recommendedName>
</protein>
<keyword id="KW-0963">Cytoplasm</keyword>
<keyword id="KW-0238">DNA-binding</keyword>
<sequence length="113" mass="12021">MAKGGFPGGFGGGNMNNLMKQAQKLQKQMEDMQKDLETKEFETSVGGGAVSVTVTGKKEVKSINIKPEVVDPDDVEMLEDLVLTAVNEALRKAEEETASKMGKLTGGMPGGLF</sequence>